<sequence>MMGDNEGRRTPLLNLGVQVSMRVLIIGAAMASMWVMITNREVASVYGIAFEAKYSYSSAFRYLVYAQIAVCAATLFTLVWACLAVRRRGLVFALFFFDLLTTLTAISAFSAAFAEGYVGKYGNKQAGWLPICGYVHVYCSRVTISLAMSFASFVLLFILTVLTASSARHY</sequence>
<feature type="chain" id="PRO_0000412004" description="CASP-like protein 1F1">
    <location>
        <begin position="1"/>
        <end position="170"/>
    </location>
</feature>
<feature type="topological domain" description="Cytoplasmic" evidence="2">
    <location>
        <begin position="1"/>
        <end position="16"/>
    </location>
</feature>
<feature type="transmembrane region" description="Helical" evidence="2">
    <location>
        <begin position="17"/>
        <end position="37"/>
    </location>
</feature>
<feature type="topological domain" description="Extracellular" evidence="2">
    <location>
        <begin position="38"/>
        <end position="62"/>
    </location>
</feature>
<feature type="transmembrane region" description="Helical" evidence="2">
    <location>
        <begin position="63"/>
        <end position="83"/>
    </location>
</feature>
<feature type="topological domain" description="Cytoplasmic" evidence="2">
    <location>
        <begin position="84"/>
        <end position="88"/>
    </location>
</feature>
<feature type="transmembrane region" description="Helical" evidence="2">
    <location>
        <begin position="89"/>
        <end position="109"/>
    </location>
</feature>
<feature type="topological domain" description="Extracellular" evidence="2">
    <location>
        <begin position="110"/>
        <end position="141"/>
    </location>
</feature>
<feature type="transmembrane region" description="Helical" evidence="2">
    <location>
        <begin position="142"/>
        <end position="162"/>
    </location>
</feature>
<feature type="topological domain" description="Cytoplasmic" evidence="2">
    <location>
        <begin position="163"/>
        <end position="170"/>
    </location>
</feature>
<gene>
    <name type="ORF">ARALYDRAFT_492333</name>
</gene>
<proteinExistence type="inferred from homology"/>
<name>CSPL5_ARALL</name>
<organism>
    <name type="scientific">Arabidopsis lyrata subsp. lyrata</name>
    <name type="common">Lyre-leaved rock-cress</name>
    <dbReference type="NCBI Taxonomy" id="81972"/>
    <lineage>
        <taxon>Eukaryota</taxon>
        <taxon>Viridiplantae</taxon>
        <taxon>Streptophyta</taxon>
        <taxon>Embryophyta</taxon>
        <taxon>Tracheophyta</taxon>
        <taxon>Spermatophyta</taxon>
        <taxon>Magnoliopsida</taxon>
        <taxon>eudicotyledons</taxon>
        <taxon>Gunneridae</taxon>
        <taxon>Pentapetalae</taxon>
        <taxon>rosids</taxon>
        <taxon>malvids</taxon>
        <taxon>Brassicales</taxon>
        <taxon>Brassicaceae</taxon>
        <taxon>Camelineae</taxon>
        <taxon>Arabidopsis</taxon>
    </lineage>
</organism>
<keyword id="KW-1003">Cell membrane</keyword>
<keyword id="KW-0472">Membrane</keyword>
<keyword id="KW-1185">Reference proteome</keyword>
<keyword id="KW-0812">Transmembrane</keyword>
<keyword id="KW-1133">Transmembrane helix</keyword>
<protein>
    <recommendedName>
        <fullName>CASP-like protein 1F1</fullName>
        <shortName>AlCASPL1F1</shortName>
    </recommendedName>
</protein>
<comment type="subunit">
    <text evidence="1">Homodimer and heterodimers.</text>
</comment>
<comment type="subcellular location">
    <subcellularLocation>
        <location evidence="1">Cell membrane</location>
        <topology evidence="1">Multi-pass membrane protein</topology>
    </subcellularLocation>
</comment>
<comment type="similarity">
    <text evidence="3">Belongs to the Casparian strip membrane proteins (CASP) family.</text>
</comment>
<accession>D7MGK0</accession>
<dbReference type="EMBL" id="GL348719">
    <property type="protein sequence ID" value="EFH45951.1"/>
    <property type="molecule type" value="Genomic_DNA"/>
</dbReference>
<dbReference type="RefSeq" id="XP_002869692.1">
    <property type="nucleotide sequence ID" value="XM_002869646.1"/>
</dbReference>
<dbReference type="SMR" id="D7MGK0"/>
<dbReference type="STRING" id="81972.D7MGK0"/>
<dbReference type="EnsemblPlants" id="fgenesh2_kg.7__1766__AT4G25040.1">
    <property type="protein sequence ID" value="fgenesh2_kg.7__1766__AT4G25040.1"/>
    <property type="gene ID" value="fgenesh2_kg.7__1766__AT4G25040.1"/>
</dbReference>
<dbReference type="Gramene" id="fgenesh2_kg.7__1766__AT4G25040.1">
    <property type="protein sequence ID" value="fgenesh2_kg.7__1766__AT4G25040.1"/>
    <property type="gene ID" value="fgenesh2_kg.7__1766__AT4G25040.1"/>
</dbReference>
<dbReference type="eggNOG" id="ENOG502S695">
    <property type="taxonomic scope" value="Eukaryota"/>
</dbReference>
<dbReference type="HOGENOM" id="CLU_066104_3_0_1"/>
<dbReference type="OrthoDB" id="1904499at2759"/>
<dbReference type="Proteomes" id="UP000008694">
    <property type="component" value="Unassembled WGS sequence"/>
</dbReference>
<dbReference type="GO" id="GO:0005886">
    <property type="term" value="C:plasma membrane"/>
    <property type="evidence" value="ECO:0007669"/>
    <property type="project" value="UniProtKB-SubCell"/>
</dbReference>
<dbReference type="InterPro" id="IPR006459">
    <property type="entry name" value="CASP/CASPL"/>
</dbReference>
<dbReference type="InterPro" id="IPR006702">
    <property type="entry name" value="CASP_dom"/>
</dbReference>
<dbReference type="InterPro" id="IPR044173">
    <property type="entry name" value="CASPL"/>
</dbReference>
<dbReference type="NCBIfam" id="TIGR01569">
    <property type="entry name" value="A_tha_TIGR01569"/>
    <property type="match status" value="1"/>
</dbReference>
<dbReference type="PANTHER" id="PTHR36488">
    <property type="entry name" value="CASP-LIKE PROTEIN 1U1"/>
    <property type="match status" value="1"/>
</dbReference>
<dbReference type="PANTHER" id="PTHR36488:SF8">
    <property type="entry name" value="CASP-LIKE PROTEIN 1U1"/>
    <property type="match status" value="1"/>
</dbReference>
<dbReference type="Pfam" id="PF04535">
    <property type="entry name" value="CASP_dom"/>
    <property type="match status" value="1"/>
</dbReference>
<evidence type="ECO:0000250" key="1"/>
<evidence type="ECO:0000255" key="2"/>
<evidence type="ECO:0000305" key="3"/>
<reference key="1">
    <citation type="journal article" date="2011" name="Nat. Genet.">
        <title>The Arabidopsis lyrata genome sequence and the basis of rapid genome size change.</title>
        <authorList>
            <person name="Hu T.T."/>
            <person name="Pattyn P."/>
            <person name="Bakker E.G."/>
            <person name="Cao J."/>
            <person name="Cheng J.-F."/>
            <person name="Clark R.M."/>
            <person name="Fahlgren N."/>
            <person name="Fawcett J.A."/>
            <person name="Grimwood J."/>
            <person name="Gundlach H."/>
            <person name="Haberer G."/>
            <person name="Hollister J.D."/>
            <person name="Ossowski S."/>
            <person name="Ottilar R.P."/>
            <person name="Salamov A.A."/>
            <person name="Schneeberger K."/>
            <person name="Spannagl M."/>
            <person name="Wang X."/>
            <person name="Yang L."/>
            <person name="Nasrallah M.E."/>
            <person name="Bergelson J."/>
            <person name="Carrington J.C."/>
            <person name="Gaut B.S."/>
            <person name="Schmutz J."/>
            <person name="Mayer K.F.X."/>
            <person name="Van de Peer Y."/>
            <person name="Grigoriev I.V."/>
            <person name="Nordborg M."/>
            <person name="Weigel D."/>
            <person name="Guo Y.-L."/>
        </authorList>
    </citation>
    <scope>NUCLEOTIDE SEQUENCE [LARGE SCALE GENOMIC DNA]</scope>
    <source>
        <strain>cv. MN47</strain>
    </source>
</reference>
<reference key="2">
    <citation type="journal article" date="2014" name="Plant Physiol.">
        <title>Functional and evolutionary analysis of the CASPARIAN STRIP MEMBRANE DOMAIN PROTEIN family.</title>
        <authorList>
            <person name="Roppolo D."/>
            <person name="Boeckmann B."/>
            <person name="Pfister A."/>
            <person name="Boutet E."/>
            <person name="Rubio M.C."/>
            <person name="Denervaud-Tendon V."/>
            <person name="Vermeer J.E."/>
            <person name="Gheyselinck J."/>
            <person name="Xenarios I."/>
            <person name="Geldner N."/>
        </authorList>
    </citation>
    <scope>GENE FAMILY</scope>
    <scope>NOMENCLATURE</scope>
</reference>